<comment type="function">
    <text evidence="1">Negative regulator of class I heat shock genes (grpE-dnaK-dnaJ and groELS operons). Prevents heat-shock induction of these operons.</text>
</comment>
<comment type="similarity">
    <text evidence="1">Belongs to the HrcA family.</text>
</comment>
<accession>B3QZK4</accession>
<proteinExistence type="inferred from homology"/>
<evidence type="ECO:0000255" key="1">
    <source>
        <dbReference type="HAMAP-Rule" id="MF_00081"/>
    </source>
</evidence>
<keyword id="KW-1185">Reference proteome</keyword>
<keyword id="KW-0678">Repressor</keyword>
<keyword id="KW-0346">Stress response</keyword>
<keyword id="KW-0804">Transcription</keyword>
<keyword id="KW-0805">Transcription regulation</keyword>
<feature type="chain" id="PRO_1000118309" description="Heat-inducible transcription repressor HrcA">
    <location>
        <begin position="1"/>
        <end position="343"/>
    </location>
</feature>
<dbReference type="EMBL" id="CU469464">
    <property type="protein sequence ID" value="CAP18391.1"/>
    <property type="molecule type" value="Genomic_DNA"/>
</dbReference>
<dbReference type="SMR" id="B3QZK4"/>
<dbReference type="STRING" id="37692.ATP_00204"/>
<dbReference type="KEGG" id="pml:ATP_00204"/>
<dbReference type="eggNOG" id="COG1420">
    <property type="taxonomic scope" value="Bacteria"/>
</dbReference>
<dbReference type="HOGENOM" id="CLU_050019_1_0_14"/>
<dbReference type="Proteomes" id="UP000002020">
    <property type="component" value="Chromosome"/>
</dbReference>
<dbReference type="GO" id="GO:0003677">
    <property type="term" value="F:DNA binding"/>
    <property type="evidence" value="ECO:0007669"/>
    <property type="project" value="InterPro"/>
</dbReference>
<dbReference type="GO" id="GO:0003700">
    <property type="term" value="F:DNA-binding transcription factor activity"/>
    <property type="evidence" value="ECO:0007669"/>
    <property type="project" value="InterPro"/>
</dbReference>
<dbReference type="GO" id="GO:0045892">
    <property type="term" value="P:negative regulation of DNA-templated transcription"/>
    <property type="evidence" value="ECO:0007669"/>
    <property type="project" value="UniProtKB-UniRule"/>
</dbReference>
<dbReference type="Gene3D" id="3.30.450.40">
    <property type="match status" value="1"/>
</dbReference>
<dbReference type="Gene3D" id="3.30.390.60">
    <property type="entry name" value="Heat-inducible transcription repressor hrca homolog, domain 3"/>
    <property type="match status" value="1"/>
</dbReference>
<dbReference type="Gene3D" id="1.10.10.10">
    <property type="entry name" value="Winged helix-like DNA-binding domain superfamily/Winged helix DNA-binding domain"/>
    <property type="match status" value="1"/>
</dbReference>
<dbReference type="HAMAP" id="MF_00081">
    <property type="entry name" value="HrcA"/>
    <property type="match status" value="1"/>
</dbReference>
<dbReference type="InterPro" id="IPR001034">
    <property type="entry name" value="DeoR_HTH"/>
</dbReference>
<dbReference type="InterPro" id="IPR029016">
    <property type="entry name" value="GAF-like_dom_sf"/>
</dbReference>
<dbReference type="InterPro" id="IPR002571">
    <property type="entry name" value="HrcA"/>
</dbReference>
<dbReference type="InterPro" id="IPR021153">
    <property type="entry name" value="HrcA_C"/>
</dbReference>
<dbReference type="InterPro" id="IPR036388">
    <property type="entry name" value="WH-like_DNA-bd_sf"/>
</dbReference>
<dbReference type="InterPro" id="IPR036390">
    <property type="entry name" value="WH_DNA-bd_sf"/>
</dbReference>
<dbReference type="InterPro" id="IPR023120">
    <property type="entry name" value="WHTH_transcript_rep_HrcA_IDD"/>
</dbReference>
<dbReference type="NCBIfam" id="TIGR00331">
    <property type="entry name" value="hrcA"/>
    <property type="match status" value="1"/>
</dbReference>
<dbReference type="PANTHER" id="PTHR34824">
    <property type="entry name" value="HEAT-INDUCIBLE TRANSCRIPTION REPRESSOR HRCA"/>
    <property type="match status" value="1"/>
</dbReference>
<dbReference type="PANTHER" id="PTHR34824:SF1">
    <property type="entry name" value="HEAT-INDUCIBLE TRANSCRIPTION REPRESSOR HRCA"/>
    <property type="match status" value="1"/>
</dbReference>
<dbReference type="Pfam" id="PF01628">
    <property type="entry name" value="HrcA"/>
    <property type="match status" value="1"/>
</dbReference>
<dbReference type="Pfam" id="PF08220">
    <property type="entry name" value="HTH_DeoR"/>
    <property type="match status" value="1"/>
</dbReference>
<dbReference type="PIRSF" id="PIRSF005485">
    <property type="entry name" value="HrcA"/>
    <property type="match status" value="1"/>
</dbReference>
<dbReference type="SUPFAM" id="SSF55781">
    <property type="entry name" value="GAF domain-like"/>
    <property type="match status" value="1"/>
</dbReference>
<dbReference type="SUPFAM" id="SSF46785">
    <property type="entry name" value="Winged helix' DNA-binding domain"/>
    <property type="match status" value="1"/>
</dbReference>
<organism>
    <name type="scientific">Phytoplasma mali (strain AT)</name>
    <dbReference type="NCBI Taxonomy" id="482235"/>
    <lineage>
        <taxon>Bacteria</taxon>
        <taxon>Bacillati</taxon>
        <taxon>Mycoplasmatota</taxon>
        <taxon>Mollicutes</taxon>
        <taxon>Acholeplasmatales</taxon>
        <taxon>Acholeplasmataceae</taxon>
        <taxon>Candidatus Phytoplasma</taxon>
        <taxon>16SrX (Apple proliferation group)</taxon>
    </lineage>
</organism>
<reference key="1">
    <citation type="journal article" date="2008" name="BMC Genomics">
        <title>The linear chromosome of the plant-pathogenic mycoplasma 'Candidatus Phytoplasma mali'.</title>
        <authorList>
            <person name="Kube M."/>
            <person name="Schneider B."/>
            <person name="Kuhl H."/>
            <person name="Dandekar T."/>
            <person name="Heitmann K."/>
            <person name="Migdoll A.M."/>
            <person name="Reinhardt R."/>
            <person name="Seemueller E."/>
        </authorList>
    </citation>
    <scope>NUCLEOTIDE SEQUENCE [LARGE SCALE GENOMIC DNA]</scope>
    <source>
        <strain>AT</strain>
    </source>
</reference>
<name>HRCA_PHYMT</name>
<protein>
    <recommendedName>
        <fullName evidence="1">Heat-inducible transcription repressor HrcA</fullName>
    </recommendedName>
</protein>
<sequence>MLSNRKKIILKSIIENYSKEAKPVSSKLLTYTLHLNVSSATIRADMAELEKQGYLLKKNYNSSGRIPSFKGYNYYLNNLIKRNEEFIEMFSFVDKIIQKKSFTKEQLIKKVLELLSEFTSYTAIAIGSDILKTSKINKIDLIYLNYFELIILIVTDKGHVQHQNIVLNQKKDVNMLDIKKVIIILNDLLKGKFLFEATLIIQSDIVKKTIGKYINCEEQFIESFVEIFANFVDNNCYLSGVLNILNQPEFNNIEIIKKLINCLTKKELIKIMTIKKRLTFKFSDNIELIQLENFTIISIPYSINKYEKGQIAILGPYRMNYHKVIPLLEYLSVYLSNLYDLNN</sequence>
<gene>
    <name evidence="1" type="primary">hrcA</name>
    <name type="ordered locus">ATP_00204</name>
</gene>